<organism>
    <name type="scientific">Eremothecium gossypii (strain ATCC 10895 / CBS 109.51 / FGSC 9923 / NRRL Y-1056)</name>
    <name type="common">Yeast</name>
    <name type="synonym">Ashbya gossypii</name>
    <dbReference type="NCBI Taxonomy" id="284811"/>
    <lineage>
        <taxon>Eukaryota</taxon>
        <taxon>Fungi</taxon>
        <taxon>Dikarya</taxon>
        <taxon>Ascomycota</taxon>
        <taxon>Saccharomycotina</taxon>
        <taxon>Saccharomycetes</taxon>
        <taxon>Saccharomycetales</taxon>
        <taxon>Saccharomycetaceae</taxon>
        <taxon>Eremothecium</taxon>
    </lineage>
</organism>
<feature type="chain" id="PRO_0000292506" description="Vacuolar protein sorting-associated protein 27">
    <location>
        <begin position="1"/>
        <end position="604"/>
    </location>
</feature>
<feature type="domain" description="VHS" evidence="4">
    <location>
        <begin position="20"/>
        <end position="153"/>
    </location>
</feature>
<feature type="domain" description="UIM 1" evidence="3">
    <location>
        <begin position="260"/>
        <end position="279"/>
    </location>
</feature>
<feature type="domain" description="UIM 2" evidence="3">
    <location>
        <begin position="298"/>
        <end position="317"/>
    </location>
</feature>
<feature type="zinc finger region" description="FYVE-type; atypical" evidence="2">
    <location>
        <begin position="175"/>
        <end position="235"/>
    </location>
</feature>
<feature type="region of interest" description="Disordered" evidence="5">
    <location>
        <begin position="241"/>
        <end position="263"/>
    </location>
</feature>
<feature type="region of interest" description="Disordered" evidence="5">
    <location>
        <begin position="314"/>
        <end position="335"/>
    </location>
</feature>
<feature type="region of interest" description="Disordered" evidence="5">
    <location>
        <begin position="465"/>
        <end position="604"/>
    </location>
</feature>
<feature type="compositionally biased region" description="Basic residues" evidence="5">
    <location>
        <begin position="241"/>
        <end position="253"/>
    </location>
</feature>
<feature type="compositionally biased region" description="Basic and acidic residues" evidence="5">
    <location>
        <begin position="254"/>
        <end position="263"/>
    </location>
</feature>
<feature type="compositionally biased region" description="Low complexity" evidence="5">
    <location>
        <begin position="488"/>
        <end position="499"/>
    </location>
</feature>
<feature type="compositionally biased region" description="Polar residues" evidence="5">
    <location>
        <begin position="507"/>
        <end position="523"/>
    </location>
</feature>
<feature type="compositionally biased region" description="Polar residues" evidence="5">
    <location>
        <begin position="581"/>
        <end position="597"/>
    </location>
</feature>
<feature type="binding site" evidence="2">
    <location>
        <position position="181"/>
    </location>
    <ligand>
        <name>Zn(2+)</name>
        <dbReference type="ChEBI" id="CHEBI:29105"/>
        <label>1</label>
    </ligand>
</feature>
<feature type="binding site" evidence="2">
    <location>
        <position position="184"/>
    </location>
    <ligand>
        <name>Zn(2+)</name>
        <dbReference type="ChEBI" id="CHEBI:29105"/>
        <label>1</label>
    </ligand>
</feature>
<feature type="binding site" evidence="2">
    <location>
        <position position="197"/>
    </location>
    <ligand>
        <name>Zn(2+)</name>
        <dbReference type="ChEBI" id="CHEBI:29105"/>
        <label>2</label>
    </ligand>
</feature>
<feature type="binding site" evidence="2">
    <location>
        <position position="200"/>
    </location>
    <ligand>
        <name>Zn(2+)</name>
        <dbReference type="ChEBI" id="CHEBI:29105"/>
        <label>2</label>
    </ligand>
</feature>
<feature type="binding site" evidence="2">
    <location>
        <position position="205"/>
    </location>
    <ligand>
        <name>Zn(2+)</name>
        <dbReference type="ChEBI" id="CHEBI:29105"/>
        <label>1</label>
    </ligand>
</feature>
<feature type="binding site" evidence="2">
    <location>
        <position position="208"/>
    </location>
    <ligand>
        <name>Zn(2+)</name>
        <dbReference type="ChEBI" id="CHEBI:29105"/>
        <label>1</label>
    </ligand>
</feature>
<feature type="binding site" evidence="2">
    <location>
        <position position="227"/>
    </location>
    <ligand>
        <name>Zn(2+)</name>
        <dbReference type="ChEBI" id="CHEBI:29105"/>
        <label>2</label>
    </ligand>
</feature>
<feature type="binding site" evidence="2">
    <location>
        <position position="230"/>
    </location>
    <ligand>
        <name>Zn(2+)</name>
        <dbReference type="ChEBI" id="CHEBI:29105"/>
        <label>2</label>
    </ligand>
</feature>
<evidence type="ECO:0000250" key="1"/>
<evidence type="ECO:0000255" key="2">
    <source>
        <dbReference type="PROSITE-ProRule" id="PRU00091"/>
    </source>
</evidence>
<evidence type="ECO:0000255" key="3">
    <source>
        <dbReference type="PROSITE-ProRule" id="PRU00213"/>
    </source>
</evidence>
<evidence type="ECO:0000255" key="4">
    <source>
        <dbReference type="PROSITE-ProRule" id="PRU00218"/>
    </source>
</evidence>
<evidence type="ECO:0000256" key="5">
    <source>
        <dbReference type="SAM" id="MobiDB-lite"/>
    </source>
</evidence>
<evidence type="ECO:0000305" key="6"/>
<reference key="1">
    <citation type="journal article" date="2004" name="Science">
        <title>The Ashbya gossypii genome as a tool for mapping the ancient Saccharomyces cerevisiae genome.</title>
        <authorList>
            <person name="Dietrich F.S."/>
            <person name="Voegeli S."/>
            <person name="Brachat S."/>
            <person name="Lerch A."/>
            <person name="Gates K."/>
            <person name="Steiner S."/>
            <person name="Mohr C."/>
            <person name="Poehlmann R."/>
            <person name="Luedi P."/>
            <person name="Choi S."/>
            <person name="Wing R.A."/>
            <person name="Flavier A."/>
            <person name="Gaffney T.D."/>
            <person name="Philippsen P."/>
        </authorList>
    </citation>
    <scope>NUCLEOTIDE SEQUENCE [LARGE SCALE GENOMIC DNA]</scope>
    <source>
        <strain>ATCC 10895 / CBS 109.51 / FGSC 9923 / NRRL Y-1056</strain>
    </source>
</reference>
<reference key="2">
    <citation type="journal article" date="2013" name="G3 (Bethesda)">
        <title>Genomes of Ashbya fungi isolated from insects reveal four mating-type loci, numerous translocations, lack of transposons, and distinct gene duplications.</title>
        <authorList>
            <person name="Dietrich F.S."/>
            <person name="Voegeli S."/>
            <person name="Kuo S."/>
            <person name="Philippsen P."/>
        </authorList>
    </citation>
    <scope>GENOME REANNOTATION</scope>
    <source>
        <strain>ATCC 10895 / CBS 109.51 / FGSC 9923 / NRRL Y-1056</strain>
    </source>
</reference>
<sequence length="604" mass="68505">MNTEIQTVAALGECIQRATSESIPNGEIDLALALDVSDAVRSRRLGARDSMRALKKRVLQTKSNPNTQLAAWRLVEVCVKNGGTHFLKEVCSREFMDCMEHVAAQEKTVDNEDLVQLCRRIIFELYTAFKNDSQLSYVSQVHQRLQARGVEFPQAAPGYLVNTMAMFDSKAPADWVDSDACMICSNAFTFLNRKHHCRSCGGIFCNEHSSHQLPLPEMGITEPVRVCDNCYDEYEIKKHSSRRLRRQSQRRARPKAEREDEDDDLRRAIELSLRESKTQDNLVPTVTRLENSDATKDDEDPEFLAAVQASLREHQLEQERQAAAAAAAAKHPSQPERAVQLPSLMDSRQAPVAQQRYSTLTNQEEDDIYLFANLVEKMKGQPMNAVLEDTQLQMLYQKVLGTRPRLNHSLNDTFHKYNTLVDMNAKISDIMSIYDTMLERQLRNINLSQQYSMPHLPSDPYTYQMHRQPESSPANTVPYEKTQPEPTYRSYARSSSNAAELTPAILHTTQSSPMENRQSQSVTGFEPQVSEPDIKKTLLSSPSEPLYPPEESIPDKEKEAQVPITQFEFPSVPAQKIKMATPQNERVTEDAGTTPQEETLLIEL</sequence>
<accession>Q755J9</accession>
<dbReference type="EMBL" id="AE016819">
    <property type="protein sequence ID" value="AAS53198.1"/>
    <property type="molecule type" value="Genomic_DNA"/>
</dbReference>
<dbReference type="RefSeq" id="NP_985374.1">
    <property type="nucleotide sequence ID" value="NM_210728.1"/>
</dbReference>
<dbReference type="SMR" id="Q755J9"/>
<dbReference type="FunCoup" id="Q755J9">
    <property type="interactions" value="133"/>
</dbReference>
<dbReference type="STRING" id="284811.Q755J9"/>
<dbReference type="EnsemblFungi" id="AAS53198">
    <property type="protein sequence ID" value="AAS53198"/>
    <property type="gene ID" value="AGOS_AFL176C"/>
</dbReference>
<dbReference type="GeneID" id="4621599"/>
<dbReference type="KEGG" id="ago:AGOS_AFL176C"/>
<dbReference type="eggNOG" id="KOG1818">
    <property type="taxonomic scope" value="Eukaryota"/>
</dbReference>
<dbReference type="HOGENOM" id="CLU_011862_2_0_1"/>
<dbReference type="InParanoid" id="Q755J9"/>
<dbReference type="OMA" id="HTWGGNT"/>
<dbReference type="OrthoDB" id="957735at2759"/>
<dbReference type="Proteomes" id="UP000000591">
    <property type="component" value="Chromosome VI"/>
</dbReference>
<dbReference type="GO" id="GO:0010008">
    <property type="term" value="C:endosome membrane"/>
    <property type="evidence" value="ECO:0007669"/>
    <property type="project" value="UniProtKB-SubCell"/>
</dbReference>
<dbReference type="GO" id="GO:0033565">
    <property type="term" value="C:ESCRT-0 complex"/>
    <property type="evidence" value="ECO:0000318"/>
    <property type="project" value="GO_Central"/>
</dbReference>
<dbReference type="GO" id="GO:0005774">
    <property type="term" value="C:vacuolar membrane"/>
    <property type="evidence" value="ECO:0007669"/>
    <property type="project" value="EnsemblFungi"/>
</dbReference>
<dbReference type="GO" id="GO:0036435">
    <property type="term" value="F:K48-linked polyubiquitin modification-dependent protein binding"/>
    <property type="evidence" value="ECO:0007669"/>
    <property type="project" value="EnsemblFungi"/>
</dbReference>
<dbReference type="GO" id="GO:0070530">
    <property type="term" value="F:K63-linked polyubiquitin modification-dependent protein binding"/>
    <property type="evidence" value="ECO:0007669"/>
    <property type="project" value="EnsemblFungi"/>
</dbReference>
<dbReference type="GO" id="GO:0032266">
    <property type="term" value="F:phosphatidylinositol-3-phosphate binding"/>
    <property type="evidence" value="ECO:0000318"/>
    <property type="project" value="GO_Central"/>
</dbReference>
<dbReference type="GO" id="GO:0019904">
    <property type="term" value="F:protein domain specific binding"/>
    <property type="evidence" value="ECO:0007669"/>
    <property type="project" value="EnsemblFungi"/>
</dbReference>
<dbReference type="GO" id="GO:0046982">
    <property type="term" value="F:protein heterodimerization activity"/>
    <property type="evidence" value="ECO:0007669"/>
    <property type="project" value="EnsemblFungi"/>
</dbReference>
<dbReference type="GO" id="GO:0043130">
    <property type="term" value="F:ubiquitin binding"/>
    <property type="evidence" value="ECO:0000318"/>
    <property type="project" value="GO_Central"/>
</dbReference>
<dbReference type="GO" id="GO:0008270">
    <property type="term" value="F:zinc ion binding"/>
    <property type="evidence" value="ECO:0007669"/>
    <property type="project" value="UniProtKB-KW"/>
</dbReference>
<dbReference type="GO" id="GO:1904669">
    <property type="term" value="P:ATP export"/>
    <property type="evidence" value="ECO:0007669"/>
    <property type="project" value="EnsemblFungi"/>
</dbReference>
<dbReference type="GO" id="GO:0006995">
    <property type="term" value="P:cellular response to nitrogen starvation"/>
    <property type="evidence" value="ECO:0007669"/>
    <property type="project" value="EnsemblFungi"/>
</dbReference>
<dbReference type="GO" id="GO:0140504">
    <property type="term" value="P:microlipophagy"/>
    <property type="evidence" value="ECO:0007669"/>
    <property type="project" value="EnsemblFungi"/>
</dbReference>
<dbReference type="GO" id="GO:1903319">
    <property type="term" value="P:positive regulation of protein maturation"/>
    <property type="evidence" value="ECO:0007669"/>
    <property type="project" value="EnsemblFungi"/>
</dbReference>
<dbReference type="GO" id="GO:0045053">
    <property type="term" value="P:protein retention in Golgi apparatus"/>
    <property type="evidence" value="ECO:0007669"/>
    <property type="project" value="EnsemblFungi"/>
</dbReference>
<dbReference type="GO" id="GO:0009306">
    <property type="term" value="P:protein secretion"/>
    <property type="evidence" value="ECO:0007669"/>
    <property type="project" value="EnsemblFungi"/>
</dbReference>
<dbReference type="GO" id="GO:0006623">
    <property type="term" value="P:protein targeting to vacuole"/>
    <property type="evidence" value="ECO:0000318"/>
    <property type="project" value="GO_Central"/>
</dbReference>
<dbReference type="GO" id="GO:0043328">
    <property type="term" value="P:protein transport to vacuole involved in ubiquitin-dependent protein catabolic process via the multivesicular body sorting pathway"/>
    <property type="evidence" value="ECO:0000318"/>
    <property type="project" value="GO_Central"/>
</dbReference>
<dbReference type="CDD" id="cd21385">
    <property type="entry name" value="GAT_Vps27"/>
    <property type="match status" value="1"/>
</dbReference>
<dbReference type="CDD" id="cd16979">
    <property type="entry name" value="VHS_Vps27"/>
    <property type="match status" value="1"/>
</dbReference>
<dbReference type="FunFam" id="1.25.40.90:FF:000039">
    <property type="entry name" value="Vacuolar protein sorting-associated protein 27"/>
    <property type="match status" value="1"/>
</dbReference>
<dbReference type="Gene3D" id="1.20.5.1940">
    <property type="match status" value="1"/>
</dbReference>
<dbReference type="Gene3D" id="1.25.40.90">
    <property type="match status" value="1"/>
</dbReference>
<dbReference type="Gene3D" id="6.10.140.100">
    <property type="match status" value="1"/>
</dbReference>
<dbReference type="Gene3D" id="3.30.40.10">
    <property type="entry name" value="Zinc/RING finger domain, C3HC4 (zinc finger)"/>
    <property type="match status" value="1"/>
</dbReference>
<dbReference type="InterPro" id="IPR008942">
    <property type="entry name" value="ENTH_VHS"/>
</dbReference>
<dbReference type="InterPro" id="IPR017073">
    <property type="entry name" value="HGS/VPS27"/>
</dbReference>
<dbReference type="InterPro" id="IPR003903">
    <property type="entry name" value="UIM_dom"/>
</dbReference>
<dbReference type="InterPro" id="IPR002014">
    <property type="entry name" value="VHS_dom"/>
</dbReference>
<dbReference type="InterPro" id="IPR049425">
    <property type="entry name" value="Vps27_GAT-like"/>
</dbReference>
<dbReference type="InterPro" id="IPR000306">
    <property type="entry name" value="Znf_FYVE"/>
</dbReference>
<dbReference type="InterPro" id="IPR017455">
    <property type="entry name" value="Znf_FYVE-rel"/>
</dbReference>
<dbReference type="InterPro" id="IPR011011">
    <property type="entry name" value="Znf_FYVE_PHD"/>
</dbReference>
<dbReference type="InterPro" id="IPR013083">
    <property type="entry name" value="Znf_RING/FYVE/PHD"/>
</dbReference>
<dbReference type="PANTHER" id="PTHR47794">
    <property type="entry name" value="VACUOLAR PROTEIN SORTING-ASSOCIATED PROTEIN 27"/>
    <property type="match status" value="1"/>
</dbReference>
<dbReference type="PANTHER" id="PTHR47794:SF1">
    <property type="entry name" value="VACUOLAR PROTEIN SORTING-ASSOCIATED PROTEIN 27"/>
    <property type="match status" value="1"/>
</dbReference>
<dbReference type="Pfam" id="PF01363">
    <property type="entry name" value="FYVE"/>
    <property type="match status" value="1"/>
</dbReference>
<dbReference type="Pfam" id="PF02809">
    <property type="entry name" value="UIM"/>
    <property type="match status" value="1"/>
</dbReference>
<dbReference type="Pfam" id="PF00790">
    <property type="entry name" value="VHS"/>
    <property type="match status" value="1"/>
</dbReference>
<dbReference type="Pfam" id="PF21356">
    <property type="entry name" value="Vps27_GAT-like"/>
    <property type="match status" value="1"/>
</dbReference>
<dbReference type="PIRSF" id="PIRSF036956">
    <property type="entry name" value="Hrs_Vps27"/>
    <property type="match status" value="1"/>
</dbReference>
<dbReference type="SMART" id="SM00064">
    <property type="entry name" value="FYVE"/>
    <property type="match status" value="1"/>
</dbReference>
<dbReference type="SMART" id="SM00726">
    <property type="entry name" value="UIM"/>
    <property type="match status" value="2"/>
</dbReference>
<dbReference type="SMART" id="SM00288">
    <property type="entry name" value="VHS"/>
    <property type="match status" value="1"/>
</dbReference>
<dbReference type="SUPFAM" id="SSF48464">
    <property type="entry name" value="ENTH/VHS domain"/>
    <property type="match status" value="1"/>
</dbReference>
<dbReference type="SUPFAM" id="SSF57903">
    <property type="entry name" value="FYVE/PHD zinc finger"/>
    <property type="match status" value="1"/>
</dbReference>
<dbReference type="PROSITE" id="PS50330">
    <property type="entry name" value="UIM"/>
    <property type="match status" value="1"/>
</dbReference>
<dbReference type="PROSITE" id="PS50179">
    <property type="entry name" value="VHS"/>
    <property type="match status" value="1"/>
</dbReference>
<dbReference type="PROSITE" id="PS50178">
    <property type="entry name" value="ZF_FYVE"/>
    <property type="match status" value="1"/>
</dbReference>
<protein>
    <recommendedName>
        <fullName>Vacuolar protein sorting-associated protein 27</fullName>
    </recommendedName>
</protein>
<name>VPS27_EREGS</name>
<proteinExistence type="inferred from homology"/>
<keyword id="KW-0967">Endosome</keyword>
<keyword id="KW-0472">Membrane</keyword>
<keyword id="KW-0479">Metal-binding</keyword>
<keyword id="KW-1185">Reference proteome</keyword>
<keyword id="KW-0677">Repeat</keyword>
<keyword id="KW-0862">Zinc</keyword>
<keyword id="KW-0863">Zinc-finger</keyword>
<gene>
    <name type="primary">VPS27</name>
    <name type="ordered locus">AFL176C</name>
</gene>
<comment type="function">
    <text evidence="1">Component of the ESCRT-0 complex which is the sorting receptor for ubiquitinated cargo proteins at the multivesicular body (MVB) and recruits ESCRT-I to the MVB outer membrane.</text>
</comment>
<comment type="subunit">
    <text>Component of the ESCRT-0 complex composed of HSE1 and VPS27.</text>
</comment>
<comment type="subcellular location">
    <subcellularLocation>
        <location evidence="1">Endosome membrane</location>
        <topology evidence="1">Peripheral membrane protein</topology>
        <orientation evidence="1">Cytoplasmic side</orientation>
    </subcellularLocation>
</comment>
<comment type="domain">
    <text>The FYVE domain is involved in the binding to phosphatidylinositol 3-phosphate (PtdIns(3)P) which is required for the association to endosomal membranes.</text>
</comment>
<comment type="domain">
    <text evidence="1">Both IUM domains are necessary for efficient binding to ubiquitin.</text>
</comment>
<comment type="similarity">
    <text evidence="6">Belongs to the VPS27 family.</text>
</comment>